<protein>
    <recommendedName>
        <fullName evidence="1">Ketol-acid reductoisomerase (NADP(+))</fullName>
        <shortName evidence="1">KARI</shortName>
        <ecNumber evidence="1">1.1.1.86</ecNumber>
    </recommendedName>
    <alternativeName>
        <fullName evidence="1">Acetohydroxy-acid isomeroreductase</fullName>
        <shortName evidence="1">AHIR</shortName>
    </alternativeName>
    <alternativeName>
        <fullName evidence="1">Alpha-keto-beta-hydroxylacyl reductoisomerase</fullName>
    </alternativeName>
    <alternativeName>
        <fullName evidence="1">Ketol-acid reductoisomerase type 1</fullName>
    </alternativeName>
    <alternativeName>
        <fullName evidence="1">Ketol-acid reductoisomerase type I</fullName>
    </alternativeName>
</protein>
<keyword id="KW-0028">Amino-acid biosynthesis</keyword>
<keyword id="KW-0100">Branched-chain amino acid biosynthesis</keyword>
<keyword id="KW-0460">Magnesium</keyword>
<keyword id="KW-0479">Metal-binding</keyword>
<keyword id="KW-0521">NADP</keyword>
<keyword id="KW-0560">Oxidoreductase</keyword>
<evidence type="ECO:0000255" key="1">
    <source>
        <dbReference type="HAMAP-Rule" id="MF_00435"/>
    </source>
</evidence>
<evidence type="ECO:0000255" key="2">
    <source>
        <dbReference type="PROSITE-ProRule" id="PRU01197"/>
    </source>
</evidence>
<evidence type="ECO:0000255" key="3">
    <source>
        <dbReference type="PROSITE-ProRule" id="PRU01198"/>
    </source>
</evidence>
<proteinExistence type="inferred from homology"/>
<dbReference type="EC" id="1.1.1.86" evidence="1"/>
<dbReference type="EMBL" id="CP001014">
    <property type="protein sequence ID" value="ACB40465.1"/>
    <property type="molecule type" value="Genomic_DNA"/>
</dbReference>
<dbReference type="RefSeq" id="WP_012350884.1">
    <property type="nucleotide sequence ID" value="NC_010525.1"/>
</dbReference>
<dbReference type="SMR" id="B1Y9N6"/>
<dbReference type="STRING" id="444157.Tneu_1541"/>
<dbReference type="GeneID" id="6165196"/>
<dbReference type="KEGG" id="tne:Tneu_1541"/>
<dbReference type="eggNOG" id="arCOG04465">
    <property type="taxonomic scope" value="Archaea"/>
</dbReference>
<dbReference type="HOGENOM" id="CLU_033821_0_1_2"/>
<dbReference type="OrthoDB" id="6064at2157"/>
<dbReference type="UniPathway" id="UPA00047">
    <property type="reaction ID" value="UER00056"/>
</dbReference>
<dbReference type="UniPathway" id="UPA00049">
    <property type="reaction ID" value="UER00060"/>
</dbReference>
<dbReference type="Proteomes" id="UP000001694">
    <property type="component" value="Chromosome"/>
</dbReference>
<dbReference type="GO" id="GO:0004455">
    <property type="term" value="F:ketol-acid reductoisomerase activity"/>
    <property type="evidence" value="ECO:0007669"/>
    <property type="project" value="UniProtKB-UniRule"/>
</dbReference>
<dbReference type="GO" id="GO:0000287">
    <property type="term" value="F:magnesium ion binding"/>
    <property type="evidence" value="ECO:0007669"/>
    <property type="project" value="UniProtKB-UniRule"/>
</dbReference>
<dbReference type="GO" id="GO:0050661">
    <property type="term" value="F:NADP binding"/>
    <property type="evidence" value="ECO:0007669"/>
    <property type="project" value="InterPro"/>
</dbReference>
<dbReference type="GO" id="GO:0009097">
    <property type="term" value="P:isoleucine biosynthetic process"/>
    <property type="evidence" value="ECO:0007669"/>
    <property type="project" value="UniProtKB-UniRule"/>
</dbReference>
<dbReference type="GO" id="GO:0009099">
    <property type="term" value="P:L-valine biosynthetic process"/>
    <property type="evidence" value="ECO:0007669"/>
    <property type="project" value="UniProtKB-UniRule"/>
</dbReference>
<dbReference type="FunFam" id="3.40.50.720:FF:000023">
    <property type="entry name" value="Ketol-acid reductoisomerase (NADP(+))"/>
    <property type="match status" value="1"/>
</dbReference>
<dbReference type="Gene3D" id="6.10.240.10">
    <property type="match status" value="1"/>
</dbReference>
<dbReference type="Gene3D" id="3.40.50.720">
    <property type="entry name" value="NAD(P)-binding Rossmann-like Domain"/>
    <property type="match status" value="1"/>
</dbReference>
<dbReference type="HAMAP" id="MF_00435">
    <property type="entry name" value="IlvC"/>
    <property type="match status" value="1"/>
</dbReference>
<dbReference type="InterPro" id="IPR008927">
    <property type="entry name" value="6-PGluconate_DH-like_C_sf"/>
</dbReference>
<dbReference type="InterPro" id="IPR013023">
    <property type="entry name" value="KARI"/>
</dbReference>
<dbReference type="InterPro" id="IPR000506">
    <property type="entry name" value="KARI_C"/>
</dbReference>
<dbReference type="InterPro" id="IPR013116">
    <property type="entry name" value="KARI_N"/>
</dbReference>
<dbReference type="InterPro" id="IPR014359">
    <property type="entry name" value="KARI_prok"/>
</dbReference>
<dbReference type="InterPro" id="IPR036291">
    <property type="entry name" value="NAD(P)-bd_dom_sf"/>
</dbReference>
<dbReference type="NCBIfam" id="TIGR00465">
    <property type="entry name" value="ilvC"/>
    <property type="match status" value="1"/>
</dbReference>
<dbReference type="NCBIfam" id="NF004017">
    <property type="entry name" value="PRK05479.1"/>
    <property type="match status" value="1"/>
</dbReference>
<dbReference type="PANTHER" id="PTHR21371">
    <property type="entry name" value="KETOL-ACID REDUCTOISOMERASE, MITOCHONDRIAL"/>
    <property type="match status" value="1"/>
</dbReference>
<dbReference type="PANTHER" id="PTHR21371:SF1">
    <property type="entry name" value="KETOL-ACID REDUCTOISOMERASE, MITOCHONDRIAL"/>
    <property type="match status" value="1"/>
</dbReference>
<dbReference type="Pfam" id="PF01450">
    <property type="entry name" value="KARI_C"/>
    <property type="match status" value="1"/>
</dbReference>
<dbReference type="Pfam" id="PF07991">
    <property type="entry name" value="KARI_N"/>
    <property type="match status" value="1"/>
</dbReference>
<dbReference type="PIRSF" id="PIRSF000116">
    <property type="entry name" value="IlvC_gammaproteo"/>
    <property type="match status" value="1"/>
</dbReference>
<dbReference type="SUPFAM" id="SSF48179">
    <property type="entry name" value="6-phosphogluconate dehydrogenase C-terminal domain-like"/>
    <property type="match status" value="1"/>
</dbReference>
<dbReference type="SUPFAM" id="SSF51735">
    <property type="entry name" value="NAD(P)-binding Rossmann-fold domains"/>
    <property type="match status" value="1"/>
</dbReference>
<dbReference type="PROSITE" id="PS51851">
    <property type="entry name" value="KARI_C"/>
    <property type="match status" value="1"/>
</dbReference>
<dbReference type="PROSITE" id="PS51850">
    <property type="entry name" value="KARI_N"/>
    <property type="match status" value="1"/>
</dbReference>
<sequence>MAKIYTDKDASLEPLRGKTIAVIGYGIQGRAQALNLRDSGLKVIVGLRKGGNSWNVAASEGFEVYEVGEAVSRADVVMVLIPDMEQPKVWQSQIAPHLREGAVVDFAHGFNIHYGLIKPPKNVDVVMVAPKAPGRAVREEFLAGRGVPALVAVHQNYSGSALKYALAIAKGIGATRAGVIETTFAEETETDLIGEQTVLVGGLMELIKRGFEVLVEMGYQPEVAYFEVLNEAKLIMDLIWQRGIYGMLNGVSDTAKYGGLTVGPKIIDEEVKSKMKAAALRVKSGEFAKEWVEEYARGSPNLKRLMESVKEHPIEKVGAEMRKLLFG</sequence>
<name>ILVC_PYRNV</name>
<gene>
    <name evidence="1" type="primary">ilvC</name>
    <name type="ordered locus">Tneu_1541</name>
</gene>
<feature type="chain" id="PRO_1000191026" description="Ketol-acid reductoisomerase (NADP(+))">
    <location>
        <begin position="1"/>
        <end position="327"/>
    </location>
</feature>
<feature type="domain" description="KARI N-terminal Rossmann" evidence="2">
    <location>
        <begin position="2"/>
        <end position="182"/>
    </location>
</feature>
<feature type="domain" description="KARI C-terminal knotted" evidence="3">
    <location>
        <begin position="183"/>
        <end position="327"/>
    </location>
</feature>
<feature type="active site" evidence="1">
    <location>
        <position position="108"/>
    </location>
</feature>
<feature type="binding site" evidence="1">
    <location>
        <begin position="25"/>
        <end position="28"/>
    </location>
    <ligand>
        <name>NADP(+)</name>
        <dbReference type="ChEBI" id="CHEBI:58349"/>
    </ligand>
</feature>
<feature type="binding site" evidence="1">
    <location>
        <position position="48"/>
    </location>
    <ligand>
        <name>NADP(+)</name>
        <dbReference type="ChEBI" id="CHEBI:58349"/>
    </ligand>
</feature>
<feature type="binding site" evidence="1">
    <location>
        <position position="53"/>
    </location>
    <ligand>
        <name>NADP(+)</name>
        <dbReference type="ChEBI" id="CHEBI:58349"/>
    </ligand>
</feature>
<feature type="binding site" evidence="1">
    <location>
        <begin position="83"/>
        <end position="86"/>
    </location>
    <ligand>
        <name>NADP(+)</name>
        <dbReference type="ChEBI" id="CHEBI:58349"/>
    </ligand>
</feature>
<feature type="binding site" evidence="1">
    <location>
        <position position="134"/>
    </location>
    <ligand>
        <name>NADP(+)</name>
        <dbReference type="ChEBI" id="CHEBI:58349"/>
    </ligand>
</feature>
<feature type="binding site" evidence="1">
    <location>
        <position position="191"/>
    </location>
    <ligand>
        <name>Mg(2+)</name>
        <dbReference type="ChEBI" id="CHEBI:18420"/>
        <label>1</label>
    </ligand>
</feature>
<feature type="binding site" evidence="1">
    <location>
        <position position="191"/>
    </location>
    <ligand>
        <name>Mg(2+)</name>
        <dbReference type="ChEBI" id="CHEBI:18420"/>
        <label>2</label>
    </ligand>
</feature>
<feature type="binding site" evidence="1">
    <location>
        <position position="195"/>
    </location>
    <ligand>
        <name>Mg(2+)</name>
        <dbReference type="ChEBI" id="CHEBI:18420"/>
        <label>1</label>
    </ligand>
</feature>
<feature type="binding site" evidence="1">
    <location>
        <position position="227"/>
    </location>
    <ligand>
        <name>Mg(2+)</name>
        <dbReference type="ChEBI" id="CHEBI:18420"/>
        <label>2</label>
    </ligand>
</feature>
<feature type="binding site" evidence="1">
    <location>
        <position position="231"/>
    </location>
    <ligand>
        <name>Mg(2+)</name>
        <dbReference type="ChEBI" id="CHEBI:18420"/>
        <label>2</label>
    </ligand>
</feature>
<feature type="binding site" evidence="1">
    <location>
        <position position="252"/>
    </location>
    <ligand>
        <name>substrate</name>
    </ligand>
</feature>
<reference key="1">
    <citation type="submission" date="2008-03" db="EMBL/GenBank/DDBJ databases">
        <title>Complete sequence of Thermoproteus neutrophilus V24Sta.</title>
        <authorList>
            <consortium name="US DOE Joint Genome Institute"/>
            <person name="Copeland A."/>
            <person name="Lucas S."/>
            <person name="Lapidus A."/>
            <person name="Glavina del Rio T."/>
            <person name="Dalin E."/>
            <person name="Tice H."/>
            <person name="Bruce D."/>
            <person name="Goodwin L."/>
            <person name="Pitluck S."/>
            <person name="Sims D."/>
            <person name="Brettin T."/>
            <person name="Detter J.C."/>
            <person name="Han C."/>
            <person name="Kuske C.R."/>
            <person name="Schmutz J."/>
            <person name="Larimer F."/>
            <person name="Land M."/>
            <person name="Hauser L."/>
            <person name="Kyrpides N."/>
            <person name="Mikhailova N."/>
            <person name="Biddle J.F."/>
            <person name="Zhang Z."/>
            <person name="Fitz-Gibbon S.T."/>
            <person name="Lowe T.M."/>
            <person name="Saltikov C."/>
            <person name="House C.H."/>
            <person name="Richardson P."/>
        </authorList>
    </citation>
    <scope>NUCLEOTIDE SEQUENCE [LARGE SCALE GENOMIC DNA]</scope>
    <source>
        <strain>DSM 2338 / JCM 9278 / NBRC 100436 / V24Sta</strain>
    </source>
</reference>
<comment type="function">
    <text evidence="1">Involved in the biosynthesis of branched-chain amino acids (BCAA). Catalyzes an alkyl-migration followed by a ketol-acid reduction of (S)-2-acetolactate (S2AL) to yield (R)-2,3-dihydroxy-isovalerate. In the isomerase reaction, S2AL is rearranged via a Mg-dependent methyl migration to produce 3-hydroxy-3-methyl-2-ketobutyrate (HMKB). In the reductase reaction, this 2-ketoacid undergoes a metal-dependent reduction by NADPH to yield (R)-2,3-dihydroxy-isovalerate.</text>
</comment>
<comment type="catalytic activity">
    <reaction evidence="1">
        <text>(2R)-2,3-dihydroxy-3-methylbutanoate + NADP(+) = (2S)-2-acetolactate + NADPH + H(+)</text>
        <dbReference type="Rhea" id="RHEA:22068"/>
        <dbReference type="ChEBI" id="CHEBI:15378"/>
        <dbReference type="ChEBI" id="CHEBI:49072"/>
        <dbReference type="ChEBI" id="CHEBI:57783"/>
        <dbReference type="ChEBI" id="CHEBI:58349"/>
        <dbReference type="ChEBI" id="CHEBI:58476"/>
        <dbReference type="EC" id="1.1.1.86"/>
    </reaction>
</comment>
<comment type="catalytic activity">
    <reaction evidence="1">
        <text>(2R,3R)-2,3-dihydroxy-3-methylpentanoate + NADP(+) = (S)-2-ethyl-2-hydroxy-3-oxobutanoate + NADPH + H(+)</text>
        <dbReference type="Rhea" id="RHEA:13493"/>
        <dbReference type="ChEBI" id="CHEBI:15378"/>
        <dbReference type="ChEBI" id="CHEBI:49256"/>
        <dbReference type="ChEBI" id="CHEBI:49258"/>
        <dbReference type="ChEBI" id="CHEBI:57783"/>
        <dbReference type="ChEBI" id="CHEBI:58349"/>
        <dbReference type="EC" id="1.1.1.86"/>
    </reaction>
</comment>
<comment type="cofactor">
    <cofactor evidence="1">
        <name>Mg(2+)</name>
        <dbReference type="ChEBI" id="CHEBI:18420"/>
    </cofactor>
    <text evidence="1">Binds 2 magnesium ions per subunit.</text>
</comment>
<comment type="pathway">
    <text evidence="1">Amino-acid biosynthesis; L-isoleucine biosynthesis; L-isoleucine from 2-oxobutanoate: step 2/4.</text>
</comment>
<comment type="pathway">
    <text evidence="1">Amino-acid biosynthesis; L-valine biosynthesis; L-valine from pyruvate: step 2/4.</text>
</comment>
<comment type="similarity">
    <text evidence="1">Belongs to the ketol-acid reductoisomerase family.</text>
</comment>
<accession>B1Y9N6</accession>
<organism>
    <name type="scientific">Pyrobaculum neutrophilum (strain DSM 2338 / JCM 9278 / NBRC 100436 / V24Sta)</name>
    <name type="common">Thermoproteus neutrophilus</name>
    <dbReference type="NCBI Taxonomy" id="444157"/>
    <lineage>
        <taxon>Archaea</taxon>
        <taxon>Thermoproteota</taxon>
        <taxon>Thermoprotei</taxon>
        <taxon>Thermoproteales</taxon>
        <taxon>Thermoproteaceae</taxon>
        <taxon>Pyrobaculum</taxon>
    </lineage>
</organism>